<feature type="chain" id="PRO_1000079672" description="GTPase Era">
    <location>
        <begin position="1"/>
        <end position="298"/>
    </location>
</feature>
<feature type="domain" description="Era-type G" evidence="2">
    <location>
        <begin position="3"/>
        <end position="170"/>
    </location>
</feature>
<feature type="domain" description="KH type-2" evidence="1">
    <location>
        <begin position="201"/>
        <end position="278"/>
    </location>
</feature>
<feature type="region of interest" description="G1" evidence="2">
    <location>
        <begin position="11"/>
        <end position="18"/>
    </location>
</feature>
<feature type="region of interest" description="G2" evidence="2">
    <location>
        <begin position="37"/>
        <end position="41"/>
    </location>
</feature>
<feature type="region of interest" description="G3" evidence="2">
    <location>
        <begin position="58"/>
        <end position="61"/>
    </location>
</feature>
<feature type="region of interest" description="G4" evidence="2">
    <location>
        <begin position="120"/>
        <end position="123"/>
    </location>
</feature>
<feature type="region of interest" description="G5" evidence="2">
    <location>
        <begin position="149"/>
        <end position="151"/>
    </location>
</feature>
<feature type="binding site" evidence="1">
    <location>
        <begin position="11"/>
        <end position="18"/>
    </location>
    <ligand>
        <name>GTP</name>
        <dbReference type="ChEBI" id="CHEBI:37565"/>
    </ligand>
</feature>
<feature type="binding site" evidence="1">
    <location>
        <begin position="58"/>
        <end position="62"/>
    </location>
    <ligand>
        <name>GTP</name>
        <dbReference type="ChEBI" id="CHEBI:37565"/>
    </ligand>
</feature>
<feature type="binding site" evidence="1">
    <location>
        <begin position="120"/>
        <end position="123"/>
    </location>
    <ligand>
        <name>GTP</name>
        <dbReference type="ChEBI" id="CHEBI:37565"/>
    </ligand>
</feature>
<evidence type="ECO:0000255" key="1">
    <source>
        <dbReference type="HAMAP-Rule" id="MF_00367"/>
    </source>
</evidence>
<evidence type="ECO:0000255" key="2">
    <source>
        <dbReference type="PROSITE-ProRule" id="PRU01050"/>
    </source>
</evidence>
<reference key="1">
    <citation type="submission" date="2007-06" db="EMBL/GenBank/DDBJ databases">
        <title>Complete sequence of Clostridium beijerinckii NCIMB 8052.</title>
        <authorList>
            <consortium name="US DOE Joint Genome Institute"/>
            <person name="Copeland A."/>
            <person name="Lucas S."/>
            <person name="Lapidus A."/>
            <person name="Barry K."/>
            <person name="Detter J.C."/>
            <person name="Glavina del Rio T."/>
            <person name="Hammon N."/>
            <person name="Israni S."/>
            <person name="Dalin E."/>
            <person name="Tice H."/>
            <person name="Pitluck S."/>
            <person name="Sims D."/>
            <person name="Brettin T."/>
            <person name="Bruce D."/>
            <person name="Tapia R."/>
            <person name="Brainard J."/>
            <person name="Schmutz J."/>
            <person name="Larimer F."/>
            <person name="Land M."/>
            <person name="Hauser L."/>
            <person name="Kyrpides N."/>
            <person name="Mikhailova N."/>
            <person name="Bennet G."/>
            <person name="Cann I."/>
            <person name="Chen J.-S."/>
            <person name="Contreras A.L."/>
            <person name="Jones D."/>
            <person name="Kashket E."/>
            <person name="Mitchell W."/>
            <person name="Stoddard S."/>
            <person name="Schwarz W."/>
            <person name="Qureshi N."/>
            <person name="Young M."/>
            <person name="Shi Z."/>
            <person name="Ezeji T."/>
            <person name="White B."/>
            <person name="Blaschek H."/>
            <person name="Richardson P."/>
        </authorList>
    </citation>
    <scope>NUCLEOTIDE SEQUENCE [LARGE SCALE GENOMIC DNA]</scope>
    <source>
        <strain>ATCC 51743 / NCIMB 8052</strain>
    </source>
</reference>
<organism>
    <name type="scientific">Clostridium beijerinckii (strain ATCC 51743 / NCIMB 8052)</name>
    <name type="common">Clostridium acetobutylicum</name>
    <dbReference type="NCBI Taxonomy" id="290402"/>
    <lineage>
        <taxon>Bacteria</taxon>
        <taxon>Bacillati</taxon>
        <taxon>Bacillota</taxon>
        <taxon>Clostridia</taxon>
        <taxon>Eubacteriales</taxon>
        <taxon>Clostridiaceae</taxon>
        <taxon>Clostridium</taxon>
    </lineage>
</organism>
<sequence length="298" mass="34176">MFKSGFVTIVGRPNVGKSTLLNYIMGEKLSIVSNKPQTTRNNIQTILTGDDYQMIFVDTPGIHKPKHKLGEYMVNSAKESTKDVDLVLFLTNPDEEIGKGDKFILETLRDKKCPVFLVLNKVDESTQDRVAKSLEMYSKEFKFAEIVPISAIKGKNVDVLVELMKKAMPEGPKYYPDDMITDVQEKFVVSEIIREKALRTLRDEVPHGIAVDIIQMKQNEIGTYHIEVDLICEKDSHKGIIIGKNGQTLKRIGENSRYELERFLRSKVNLKIWVKVRKEWRDNQLLLKELGYKANSKK</sequence>
<proteinExistence type="inferred from homology"/>
<keyword id="KW-1003">Cell membrane</keyword>
<keyword id="KW-0963">Cytoplasm</keyword>
<keyword id="KW-0342">GTP-binding</keyword>
<keyword id="KW-0472">Membrane</keyword>
<keyword id="KW-0547">Nucleotide-binding</keyword>
<keyword id="KW-0690">Ribosome biogenesis</keyword>
<keyword id="KW-0694">RNA-binding</keyword>
<keyword id="KW-0699">rRNA-binding</keyword>
<name>ERA_CLOB8</name>
<comment type="function">
    <text evidence="1">An essential GTPase that binds both GDP and GTP, with rapid nucleotide exchange. Plays a role in 16S rRNA processing and 30S ribosomal subunit biogenesis and possibly also in cell cycle regulation and energy metabolism.</text>
</comment>
<comment type="subunit">
    <text evidence="1">Monomer.</text>
</comment>
<comment type="subcellular location">
    <subcellularLocation>
        <location>Cytoplasm</location>
    </subcellularLocation>
    <subcellularLocation>
        <location evidence="1">Cell membrane</location>
        <topology evidence="1">Peripheral membrane protein</topology>
    </subcellularLocation>
</comment>
<comment type="similarity">
    <text evidence="1 2">Belongs to the TRAFAC class TrmE-Era-EngA-EngB-Septin-like GTPase superfamily. Era GTPase family.</text>
</comment>
<accession>A6LRP9</accession>
<gene>
    <name evidence="1" type="primary">era</name>
    <name type="ordered locus">Cbei_0845</name>
</gene>
<dbReference type="EMBL" id="CP000721">
    <property type="protein sequence ID" value="ABR33029.1"/>
    <property type="molecule type" value="Genomic_DNA"/>
</dbReference>
<dbReference type="RefSeq" id="WP_011968188.1">
    <property type="nucleotide sequence ID" value="NC_009617.1"/>
</dbReference>
<dbReference type="SMR" id="A6LRP9"/>
<dbReference type="GeneID" id="66343786"/>
<dbReference type="KEGG" id="cbe:Cbei_0845"/>
<dbReference type="eggNOG" id="COG1159">
    <property type="taxonomic scope" value="Bacteria"/>
</dbReference>
<dbReference type="HOGENOM" id="CLU_038009_1_0_9"/>
<dbReference type="Proteomes" id="UP000000565">
    <property type="component" value="Chromosome"/>
</dbReference>
<dbReference type="GO" id="GO:0005829">
    <property type="term" value="C:cytosol"/>
    <property type="evidence" value="ECO:0007669"/>
    <property type="project" value="TreeGrafter"/>
</dbReference>
<dbReference type="GO" id="GO:0005886">
    <property type="term" value="C:plasma membrane"/>
    <property type="evidence" value="ECO:0007669"/>
    <property type="project" value="UniProtKB-SubCell"/>
</dbReference>
<dbReference type="GO" id="GO:0005525">
    <property type="term" value="F:GTP binding"/>
    <property type="evidence" value="ECO:0007669"/>
    <property type="project" value="UniProtKB-UniRule"/>
</dbReference>
<dbReference type="GO" id="GO:0003924">
    <property type="term" value="F:GTPase activity"/>
    <property type="evidence" value="ECO:0007669"/>
    <property type="project" value="UniProtKB-UniRule"/>
</dbReference>
<dbReference type="GO" id="GO:0043024">
    <property type="term" value="F:ribosomal small subunit binding"/>
    <property type="evidence" value="ECO:0007669"/>
    <property type="project" value="TreeGrafter"/>
</dbReference>
<dbReference type="GO" id="GO:0070181">
    <property type="term" value="F:small ribosomal subunit rRNA binding"/>
    <property type="evidence" value="ECO:0007669"/>
    <property type="project" value="UniProtKB-UniRule"/>
</dbReference>
<dbReference type="GO" id="GO:0000028">
    <property type="term" value="P:ribosomal small subunit assembly"/>
    <property type="evidence" value="ECO:0007669"/>
    <property type="project" value="TreeGrafter"/>
</dbReference>
<dbReference type="CDD" id="cd04163">
    <property type="entry name" value="Era"/>
    <property type="match status" value="1"/>
</dbReference>
<dbReference type="CDD" id="cd22534">
    <property type="entry name" value="KH-II_Era"/>
    <property type="match status" value="1"/>
</dbReference>
<dbReference type="FunFam" id="3.30.300.20:FF:000003">
    <property type="entry name" value="GTPase Era"/>
    <property type="match status" value="1"/>
</dbReference>
<dbReference type="FunFam" id="3.40.50.300:FF:000094">
    <property type="entry name" value="GTPase Era"/>
    <property type="match status" value="1"/>
</dbReference>
<dbReference type="Gene3D" id="3.30.300.20">
    <property type="match status" value="1"/>
</dbReference>
<dbReference type="Gene3D" id="3.40.50.300">
    <property type="entry name" value="P-loop containing nucleotide triphosphate hydrolases"/>
    <property type="match status" value="1"/>
</dbReference>
<dbReference type="HAMAP" id="MF_00367">
    <property type="entry name" value="GTPase_Era"/>
    <property type="match status" value="1"/>
</dbReference>
<dbReference type="InterPro" id="IPR030388">
    <property type="entry name" value="G_ERA_dom"/>
</dbReference>
<dbReference type="InterPro" id="IPR006073">
    <property type="entry name" value="GTP-bd"/>
</dbReference>
<dbReference type="InterPro" id="IPR005662">
    <property type="entry name" value="GTPase_Era-like"/>
</dbReference>
<dbReference type="InterPro" id="IPR015946">
    <property type="entry name" value="KH_dom-like_a/b"/>
</dbReference>
<dbReference type="InterPro" id="IPR004044">
    <property type="entry name" value="KH_dom_type_2"/>
</dbReference>
<dbReference type="InterPro" id="IPR009019">
    <property type="entry name" value="KH_sf_prok-type"/>
</dbReference>
<dbReference type="InterPro" id="IPR027417">
    <property type="entry name" value="P-loop_NTPase"/>
</dbReference>
<dbReference type="InterPro" id="IPR005225">
    <property type="entry name" value="Small_GTP-bd"/>
</dbReference>
<dbReference type="NCBIfam" id="TIGR00436">
    <property type="entry name" value="era"/>
    <property type="match status" value="1"/>
</dbReference>
<dbReference type="NCBIfam" id="NF000908">
    <property type="entry name" value="PRK00089.1"/>
    <property type="match status" value="1"/>
</dbReference>
<dbReference type="NCBIfam" id="TIGR00231">
    <property type="entry name" value="small_GTP"/>
    <property type="match status" value="1"/>
</dbReference>
<dbReference type="PANTHER" id="PTHR42698">
    <property type="entry name" value="GTPASE ERA"/>
    <property type="match status" value="1"/>
</dbReference>
<dbReference type="PANTHER" id="PTHR42698:SF1">
    <property type="entry name" value="GTPASE ERA, MITOCHONDRIAL"/>
    <property type="match status" value="1"/>
</dbReference>
<dbReference type="Pfam" id="PF07650">
    <property type="entry name" value="KH_2"/>
    <property type="match status" value="1"/>
</dbReference>
<dbReference type="Pfam" id="PF01926">
    <property type="entry name" value="MMR_HSR1"/>
    <property type="match status" value="1"/>
</dbReference>
<dbReference type="SUPFAM" id="SSF52540">
    <property type="entry name" value="P-loop containing nucleoside triphosphate hydrolases"/>
    <property type="match status" value="1"/>
</dbReference>
<dbReference type="SUPFAM" id="SSF54814">
    <property type="entry name" value="Prokaryotic type KH domain (KH-domain type II)"/>
    <property type="match status" value="1"/>
</dbReference>
<dbReference type="PROSITE" id="PS51713">
    <property type="entry name" value="G_ERA"/>
    <property type="match status" value="1"/>
</dbReference>
<dbReference type="PROSITE" id="PS50823">
    <property type="entry name" value="KH_TYPE_2"/>
    <property type="match status" value="1"/>
</dbReference>
<protein>
    <recommendedName>
        <fullName evidence="1">GTPase Era</fullName>
    </recommendedName>
</protein>